<keyword id="KW-0067">ATP-binding</keyword>
<keyword id="KW-0143">Chaperone</keyword>
<keyword id="KW-0547">Nucleotide-binding</keyword>
<keyword id="KW-0597">Phosphoprotein</keyword>
<keyword id="KW-0346">Stress response</keyword>
<name>DNAK_PSEA8</name>
<organism>
    <name type="scientific">Pseudomonas aeruginosa (strain LESB58)</name>
    <dbReference type="NCBI Taxonomy" id="557722"/>
    <lineage>
        <taxon>Bacteria</taxon>
        <taxon>Pseudomonadati</taxon>
        <taxon>Pseudomonadota</taxon>
        <taxon>Gammaproteobacteria</taxon>
        <taxon>Pseudomonadales</taxon>
        <taxon>Pseudomonadaceae</taxon>
        <taxon>Pseudomonas</taxon>
    </lineage>
</organism>
<comment type="function">
    <text evidence="1">Acts as a chaperone.</text>
</comment>
<comment type="induction">
    <text evidence="1">By stress conditions e.g. heat shock.</text>
</comment>
<comment type="similarity">
    <text evidence="1">Belongs to the heat shock protein 70 family.</text>
</comment>
<feature type="chain" id="PRO_1000119742" description="Chaperone protein DnaK">
    <location>
        <begin position="1"/>
        <end position="637"/>
    </location>
</feature>
<feature type="region of interest" description="Disordered" evidence="2">
    <location>
        <begin position="603"/>
        <end position="623"/>
    </location>
</feature>
<feature type="modified residue" description="Phosphothreonine; by autocatalysis" evidence="1">
    <location>
        <position position="199"/>
    </location>
</feature>
<dbReference type="EMBL" id="FM209186">
    <property type="protein sequence ID" value="CAW29900.1"/>
    <property type="molecule type" value="Genomic_DNA"/>
</dbReference>
<dbReference type="RefSeq" id="WP_012614574.1">
    <property type="nucleotide sequence ID" value="NC_011770.1"/>
</dbReference>
<dbReference type="SMR" id="B7V1H3"/>
<dbReference type="KEGG" id="pag:PLES_51461"/>
<dbReference type="HOGENOM" id="CLU_005965_2_1_6"/>
<dbReference type="GO" id="GO:0005524">
    <property type="term" value="F:ATP binding"/>
    <property type="evidence" value="ECO:0007669"/>
    <property type="project" value="UniProtKB-UniRule"/>
</dbReference>
<dbReference type="GO" id="GO:0140662">
    <property type="term" value="F:ATP-dependent protein folding chaperone"/>
    <property type="evidence" value="ECO:0007669"/>
    <property type="project" value="InterPro"/>
</dbReference>
<dbReference type="GO" id="GO:0051082">
    <property type="term" value="F:unfolded protein binding"/>
    <property type="evidence" value="ECO:0007669"/>
    <property type="project" value="InterPro"/>
</dbReference>
<dbReference type="CDD" id="cd10234">
    <property type="entry name" value="ASKHA_NBD_HSP70_DnaK-like"/>
    <property type="match status" value="1"/>
</dbReference>
<dbReference type="FunFam" id="2.60.34.10:FF:000014">
    <property type="entry name" value="Chaperone protein DnaK HSP70"/>
    <property type="match status" value="1"/>
</dbReference>
<dbReference type="FunFam" id="3.30.30.30:FF:000003">
    <property type="entry name" value="Heat shock protein 9"/>
    <property type="match status" value="1"/>
</dbReference>
<dbReference type="FunFam" id="1.20.1270.10:FF:000001">
    <property type="entry name" value="Molecular chaperone DnaK"/>
    <property type="match status" value="1"/>
</dbReference>
<dbReference type="FunFam" id="3.30.420.40:FF:000004">
    <property type="entry name" value="Molecular chaperone DnaK"/>
    <property type="match status" value="1"/>
</dbReference>
<dbReference type="FunFam" id="3.90.640.10:FF:000003">
    <property type="entry name" value="Molecular chaperone DnaK"/>
    <property type="match status" value="1"/>
</dbReference>
<dbReference type="Gene3D" id="1.20.1270.10">
    <property type="match status" value="1"/>
</dbReference>
<dbReference type="Gene3D" id="3.30.420.40">
    <property type="match status" value="2"/>
</dbReference>
<dbReference type="Gene3D" id="3.90.640.10">
    <property type="entry name" value="Actin, Chain A, domain 4"/>
    <property type="match status" value="1"/>
</dbReference>
<dbReference type="Gene3D" id="2.60.34.10">
    <property type="entry name" value="Substrate Binding Domain Of DNAk, Chain A, domain 1"/>
    <property type="match status" value="1"/>
</dbReference>
<dbReference type="HAMAP" id="MF_00332">
    <property type="entry name" value="DnaK"/>
    <property type="match status" value="1"/>
</dbReference>
<dbReference type="InterPro" id="IPR043129">
    <property type="entry name" value="ATPase_NBD"/>
</dbReference>
<dbReference type="InterPro" id="IPR012725">
    <property type="entry name" value="Chaperone_DnaK"/>
</dbReference>
<dbReference type="InterPro" id="IPR018181">
    <property type="entry name" value="Heat_shock_70_CS"/>
</dbReference>
<dbReference type="InterPro" id="IPR029048">
    <property type="entry name" value="HSP70_C_sf"/>
</dbReference>
<dbReference type="InterPro" id="IPR029047">
    <property type="entry name" value="HSP70_peptide-bd_sf"/>
</dbReference>
<dbReference type="InterPro" id="IPR013126">
    <property type="entry name" value="Hsp_70_fam"/>
</dbReference>
<dbReference type="NCBIfam" id="NF001413">
    <property type="entry name" value="PRK00290.1"/>
    <property type="match status" value="1"/>
</dbReference>
<dbReference type="NCBIfam" id="NF003520">
    <property type="entry name" value="PRK05183.1"/>
    <property type="match status" value="1"/>
</dbReference>
<dbReference type="NCBIfam" id="TIGR02350">
    <property type="entry name" value="prok_dnaK"/>
    <property type="match status" value="1"/>
</dbReference>
<dbReference type="PANTHER" id="PTHR19375">
    <property type="entry name" value="HEAT SHOCK PROTEIN 70KDA"/>
    <property type="match status" value="1"/>
</dbReference>
<dbReference type="Pfam" id="PF00012">
    <property type="entry name" value="HSP70"/>
    <property type="match status" value="1"/>
</dbReference>
<dbReference type="PRINTS" id="PR00301">
    <property type="entry name" value="HEATSHOCK70"/>
</dbReference>
<dbReference type="SUPFAM" id="SSF53067">
    <property type="entry name" value="Actin-like ATPase domain"/>
    <property type="match status" value="2"/>
</dbReference>
<dbReference type="SUPFAM" id="SSF100934">
    <property type="entry name" value="Heat shock protein 70kD (HSP70), C-terminal subdomain"/>
    <property type="match status" value="1"/>
</dbReference>
<dbReference type="SUPFAM" id="SSF100920">
    <property type="entry name" value="Heat shock protein 70kD (HSP70), peptide-binding domain"/>
    <property type="match status" value="1"/>
</dbReference>
<dbReference type="PROSITE" id="PS00297">
    <property type="entry name" value="HSP70_1"/>
    <property type="match status" value="1"/>
</dbReference>
<dbReference type="PROSITE" id="PS00329">
    <property type="entry name" value="HSP70_2"/>
    <property type="match status" value="1"/>
</dbReference>
<dbReference type="PROSITE" id="PS01036">
    <property type="entry name" value="HSP70_3"/>
    <property type="match status" value="1"/>
</dbReference>
<sequence length="637" mass="68376">MGKIIGIDLGTTNSCVAILENGNVKVIENAEGARTTPSIIAYTNDGETLVGQPAKRQAVTNPQNTLYAVKRLIGRRFEENVVQKDIQMVPYSIVKADNGDAWVEVKGQKMAPPQISAEVLKKMKKTAEDYLGEPVTEAVITVPAYFNDSQRQATKDAGRIAGLDVKRIINEPTAAALAYGLDKAKGDHTVIVYDLGGGTFDVSVIEIAEVDGEHQFEVLATNGDTFLGGEDFDIRLIDYLVDEFKKESGINLKGDPLAMQRLKEAAEKAKIELSSTQQTDVNLPYVTADASGPKHLNVKVSRAKLESLVEDLVQRTIEPCRTALKDAGLDVSDIHEVILVGGQTRMPLVQKTVAEFFGKEARKDVNPDEAVAVGAAIQGAVLAGDVKDVLLLDVTPLTLGIETLGGVMTGLIEKNTTIPTKKSQVFSTADDNQGAVTIHVLQGERKQAAQNKSLGKFDLADIPPAPRGVPQIEVTFDIDANGILHVSAKDKATGKQQSIVIKASSGLSEDEIQQMVRDAEANAEEDRKFEELAAARNQGDALVHATRKMITEAGDKATAEDKATIEKALGELEAAVKGDDKAEIEAKMSALSQASTPLAQKMYAEQAQQGEDAPQGEQAKAADDVVDAEFEEVKDNK</sequence>
<gene>
    <name evidence="1" type="primary">dnaK</name>
    <name type="ordered locus">PLES_51461</name>
</gene>
<accession>B7V1H3</accession>
<evidence type="ECO:0000255" key="1">
    <source>
        <dbReference type="HAMAP-Rule" id="MF_00332"/>
    </source>
</evidence>
<evidence type="ECO:0000256" key="2">
    <source>
        <dbReference type="SAM" id="MobiDB-lite"/>
    </source>
</evidence>
<reference key="1">
    <citation type="journal article" date="2009" name="Genome Res.">
        <title>Newly introduced genomic prophage islands are critical determinants of in vivo competitiveness in the Liverpool epidemic strain of Pseudomonas aeruginosa.</title>
        <authorList>
            <person name="Winstanley C."/>
            <person name="Langille M.G.I."/>
            <person name="Fothergill J.L."/>
            <person name="Kukavica-Ibrulj I."/>
            <person name="Paradis-Bleau C."/>
            <person name="Sanschagrin F."/>
            <person name="Thomson N.R."/>
            <person name="Winsor G.L."/>
            <person name="Quail M.A."/>
            <person name="Lennard N."/>
            <person name="Bignell A."/>
            <person name="Clarke L."/>
            <person name="Seeger K."/>
            <person name="Saunders D."/>
            <person name="Harris D."/>
            <person name="Parkhill J."/>
            <person name="Hancock R.E.W."/>
            <person name="Brinkman F.S.L."/>
            <person name="Levesque R.C."/>
        </authorList>
    </citation>
    <scope>NUCLEOTIDE SEQUENCE [LARGE SCALE GENOMIC DNA]</scope>
    <source>
        <strain>LESB58</strain>
    </source>
</reference>
<proteinExistence type="inferred from homology"/>
<protein>
    <recommendedName>
        <fullName evidence="1">Chaperone protein DnaK</fullName>
    </recommendedName>
    <alternativeName>
        <fullName evidence="1">HSP70</fullName>
    </alternativeName>
    <alternativeName>
        <fullName evidence="1">Heat shock 70 kDa protein</fullName>
    </alternativeName>
    <alternativeName>
        <fullName evidence="1">Heat shock protein 70</fullName>
    </alternativeName>
</protein>